<protein>
    <recommendedName>
        <fullName evidence="1">Chorismate synthase</fullName>
        <shortName evidence="1">CS</shortName>
        <ecNumber evidence="1">4.2.3.5</ecNumber>
    </recommendedName>
    <alternativeName>
        <fullName evidence="1">5-enolpyruvylshikimate-3-phosphate phospholyase</fullName>
    </alternativeName>
</protein>
<accession>Q5N2I0</accession>
<proteinExistence type="inferred from homology"/>
<dbReference type="EC" id="4.2.3.5" evidence="1"/>
<dbReference type="EMBL" id="AP008231">
    <property type="protein sequence ID" value="BAD79490.1"/>
    <property type="molecule type" value="Genomic_DNA"/>
</dbReference>
<dbReference type="RefSeq" id="WP_011243612.1">
    <property type="nucleotide sequence ID" value="NC_006576.1"/>
</dbReference>
<dbReference type="SMR" id="Q5N2I0"/>
<dbReference type="KEGG" id="syc:syc1300_c"/>
<dbReference type="eggNOG" id="COG0082">
    <property type="taxonomic scope" value="Bacteria"/>
</dbReference>
<dbReference type="UniPathway" id="UPA00053">
    <property type="reaction ID" value="UER00090"/>
</dbReference>
<dbReference type="Proteomes" id="UP000001175">
    <property type="component" value="Chromosome"/>
</dbReference>
<dbReference type="GO" id="GO:0005829">
    <property type="term" value="C:cytosol"/>
    <property type="evidence" value="ECO:0007669"/>
    <property type="project" value="TreeGrafter"/>
</dbReference>
<dbReference type="GO" id="GO:0004107">
    <property type="term" value="F:chorismate synthase activity"/>
    <property type="evidence" value="ECO:0007669"/>
    <property type="project" value="UniProtKB-UniRule"/>
</dbReference>
<dbReference type="GO" id="GO:0010181">
    <property type="term" value="F:FMN binding"/>
    <property type="evidence" value="ECO:0007669"/>
    <property type="project" value="TreeGrafter"/>
</dbReference>
<dbReference type="GO" id="GO:0008652">
    <property type="term" value="P:amino acid biosynthetic process"/>
    <property type="evidence" value="ECO:0007669"/>
    <property type="project" value="UniProtKB-KW"/>
</dbReference>
<dbReference type="GO" id="GO:0009073">
    <property type="term" value="P:aromatic amino acid family biosynthetic process"/>
    <property type="evidence" value="ECO:0007669"/>
    <property type="project" value="UniProtKB-KW"/>
</dbReference>
<dbReference type="GO" id="GO:0009423">
    <property type="term" value="P:chorismate biosynthetic process"/>
    <property type="evidence" value="ECO:0007669"/>
    <property type="project" value="UniProtKB-UniRule"/>
</dbReference>
<dbReference type="CDD" id="cd07304">
    <property type="entry name" value="Chorismate_synthase"/>
    <property type="match status" value="1"/>
</dbReference>
<dbReference type="FunFam" id="3.60.150.10:FF:000003">
    <property type="entry name" value="Chorismate synthase"/>
    <property type="match status" value="1"/>
</dbReference>
<dbReference type="Gene3D" id="3.60.150.10">
    <property type="entry name" value="Chorismate synthase AroC"/>
    <property type="match status" value="1"/>
</dbReference>
<dbReference type="HAMAP" id="MF_00300">
    <property type="entry name" value="Chorismate_synth"/>
    <property type="match status" value="1"/>
</dbReference>
<dbReference type="InterPro" id="IPR000453">
    <property type="entry name" value="Chorismate_synth"/>
</dbReference>
<dbReference type="InterPro" id="IPR035904">
    <property type="entry name" value="Chorismate_synth_AroC_sf"/>
</dbReference>
<dbReference type="InterPro" id="IPR020541">
    <property type="entry name" value="Chorismate_synthase_CS"/>
</dbReference>
<dbReference type="NCBIfam" id="TIGR00033">
    <property type="entry name" value="aroC"/>
    <property type="match status" value="1"/>
</dbReference>
<dbReference type="NCBIfam" id="NF003793">
    <property type="entry name" value="PRK05382.1"/>
    <property type="match status" value="1"/>
</dbReference>
<dbReference type="PANTHER" id="PTHR21085">
    <property type="entry name" value="CHORISMATE SYNTHASE"/>
    <property type="match status" value="1"/>
</dbReference>
<dbReference type="PANTHER" id="PTHR21085:SF0">
    <property type="entry name" value="CHORISMATE SYNTHASE"/>
    <property type="match status" value="1"/>
</dbReference>
<dbReference type="Pfam" id="PF01264">
    <property type="entry name" value="Chorismate_synt"/>
    <property type="match status" value="1"/>
</dbReference>
<dbReference type="PIRSF" id="PIRSF001456">
    <property type="entry name" value="Chorismate_synth"/>
    <property type="match status" value="1"/>
</dbReference>
<dbReference type="SUPFAM" id="SSF103263">
    <property type="entry name" value="Chorismate synthase, AroC"/>
    <property type="match status" value="1"/>
</dbReference>
<dbReference type="PROSITE" id="PS00787">
    <property type="entry name" value="CHORISMATE_SYNTHASE_1"/>
    <property type="match status" value="1"/>
</dbReference>
<dbReference type="PROSITE" id="PS00788">
    <property type="entry name" value="CHORISMATE_SYNTHASE_2"/>
    <property type="match status" value="1"/>
</dbReference>
<dbReference type="PROSITE" id="PS00789">
    <property type="entry name" value="CHORISMATE_SYNTHASE_3"/>
    <property type="match status" value="1"/>
</dbReference>
<organism>
    <name type="scientific">Synechococcus sp. (strain ATCC 27144 / PCC 6301 / SAUG 1402/1)</name>
    <name type="common">Anacystis nidulans</name>
    <dbReference type="NCBI Taxonomy" id="269084"/>
    <lineage>
        <taxon>Bacteria</taxon>
        <taxon>Bacillati</taxon>
        <taxon>Cyanobacteriota</taxon>
        <taxon>Cyanophyceae</taxon>
        <taxon>Synechococcales</taxon>
        <taxon>Synechococcaceae</taxon>
        <taxon>Synechococcus</taxon>
    </lineage>
</organism>
<evidence type="ECO:0000255" key="1">
    <source>
        <dbReference type="HAMAP-Rule" id="MF_00300"/>
    </source>
</evidence>
<reference key="1">
    <citation type="journal article" date="2007" name="Photosyn. Res.">
        <title>Complete nucleotide sequence of the freshwater unicellular cyanobacterium Synechococcus elongatus PCC 6301 chromosome: gene content and organization.</title>
        <authorList>
            <person name="Sugita C."/>
            <person name="Ogata K."/>
            <person name="Shikata M."/>
            <person name="Jikuya H."/>
            <person name="Takano J."/>
            <person name="Furumichi M."/>
            <person name="Kanehisa M."/>
            <person name="Omata T."/>
            <person name="Sugiura M."/>
            <person name="Sugita M."/>
        </authorList>
    </citation>
    <scope>NUCLEOTIDE SEQUENCE [LARGE SCALE GENOMIC DNA]</scope>
    <source>
        <strain>ATCC 27144 / PCC 6301 / SAUG 1402/1</strain>
    </source>
</reference>
<feature type="chain" id="PRO_0000140665" description="Chorismate synthase">
    <location>
        <begin position="1"/>
        <end position="362"/>
    </location>
</feature>
<feature type="binding site" evidence="1">
    <location>
        <position position="47"/>
    </location>
    <ligand>
        <name>NADP(+)</name>
        <dbReference type="ChEBI" id="CHEBI:58349"/>
    </ligand>
</feature>
<feature type="binding site" evidence="1">
    <location>
        <begin position="124"/>
        <end position="126"/>
    </location>
    <ligand>
        <name>FMN</name>
        <dbReference type="ChEBI" id="CHEBI:58210"/>
    </ligand>
</feature>
<feature type="binding site" evidence="1">
    <location>
        <position position="286"/>
    </location>
    <ligand>
        <name>FMN</name>
        <dbReference type="ChEBI" id="CHEBI:58210"/>
    </ligand>
</feature>
<feature type="binding site" evidence="1">
    <location>
        <begin position="301"/>
        <end position="305"/>
    </location>
    <ligand>
        <name>FMN</name>
        <dbReference type="ChEBI" id="CHEBI:58210"/>
    </ligand>
</feature>
<feature type="binding site" evidence="1">
    <location>
        <position position="327"/>
    </location>
    <ligand>
        <name>FMN</name>
        <dbReference type="ChEBI" id="CHEBI:58210"/>
    </ligand>
</feature>
<comment type="function">
    <text evidence="1">Catalyzes the anti-1,4-elimination of the C-3 phosphate and the C-6 proR hydrogen from 5-enolpyruvylshikimate-3-phosphate (EPSP) to yield chorismate, which is the branch point compound that serves as the starting substrate for the three terminal pathways of aromatic amino acid biosynthesis. This reaction introduces a second double bond into the aromatic ring system.</text>
</comment>
<comment type="catalytic activity">
    <reaction evidence="1">
        <text>5-O-(1-carboxyvinyl)-3-phosphoshikimate = chorismate + phosphate</text>
        <dbReference type="Rhea" id="RHEA:21020"/>
        <dbReference type="ChEBI" id="CHEBI:29748"/>
        <dbReference type="ChEBI" id="CHEBI:43474"/>
        <dbReference type="ChEBI" id="CHEBI:57701"/>
        <dbReference type="EC" id="4.2.3.5"/>
    </reaction>
</comment>
<comment type="cofactor">
    <cofactor evidence="1">
        <name>FMNH2</name>
        <dbReference type="ChEBI" id="CHEBI:57618"/>
    </cofactor>
    <text evidence="1">Reduced FMN (FMNH(2)).</text>
</comment>
<comment type="pathway">
    <text evidence="1">Metabolic intermediate biosynthesis; chorismate biosynthesis; chorismate from D-erythrose 4-phosphate and phosphoenolpyruvate: step 7/7.</text>
</comment>
<comment type="subunit">
    <text evidence="1">Homotetramer.</text>
</comment>
<comment type="similarity">
    <text evidence="1">Belongs to the chorismate synthase family.</text>
</comment>
<name>AROC_SYNP6</name>
<gene>
    <name evidence="1" type="primary">aroC</name>
    <name type="ordered locus">syc1300_c</name>
</gene>
<keyword id="KW-0028">Amino-acid biosynthesis</keyword>
<keyword id="KW-0057">Aromatic amino acid biosynthesis</keyword>
<keyword id="KW-0274">FAD</keyword>
<keyword id="KW-0285">Flavoprotein</keyword>
<keyword id="KW-0288">FMN</keyword>
<keyword id="KW-0456">Lyase</keyword>
<keyword id="KW-0521">NADP</keyword>
<sequence>MGSSFGHLFRISTFGESHGGGVGVVIDGCPPRLEISEAEIQFELDRRRPGQSKITTPRKEADQCEILSGVVDGKTLDTPIAIVVRNKDQRSQDYSEMQVAYRPSHADATYDAKYGIRAVAGGGRSSARETIGRVAAGAIAKKLLREIAGVEIVGYVKRIKDLEGQIDPETVTLEQVESTIVRCPDEAIAPQMIDLIEAIGREGDSLGGVVECVARRVPRGLGEPVFDKLEADLAKACMSLPATKGFEIGSGFAGTEMTGSEHNDAFYTDEQGQIRTRTNRSGGTQGGISNGENIVIRVAFKPTATIRKEQETVTNSGEATTLAARGRHDPCVLPRAVPMVEAMVALVLCDHLLRQQAQCSWW</sequence>